<organism>
    <name type="scientific">Halorhodospira halophila (strain DSM 244 / SL1)</name>
    <name type="common">Ectothiorhodospira halophila (strain DSM 244 / SL1)</name>
    <dbReference type="NCBI Taxonomy" id="349124"/>
    <lineage>
        <taxon>Bacteria</taxon>
        <taxon>Pseudomonadati</taxon>
        <taxon>Pseudomonadota</taxon>
        <taxon>Gammaproteobacteria</taxon>
        <taxon>Chromatiales</taxon>
        <taxon>Ectothiorhodospiraceae</taxon>
        <taxon>Halorhodospira</taxon>
    </lineage>
</organism>
<accession>A1WVA8</accession>
<dbReference type="EMBL" id="CP000544">
    <property type="protein sequence ID" value="ABM61620.1"/>
    <property type="molecule type" value="Genomic_DNA"/>
</dbReference>
<dbReference type="RefSeq" id="WP_011813643.1">
    <property type="nucleotide sequence ID" value="NC_008789.1"/>
</dbReference>
<dbReference type="SMR" id="A1WVA8"/>
<dbReference type="STRING" id="349124.Hhal_0844"/>
<dbReference type="KEGG" id="hha:Hhal_0844"/>
<dbReference type="eggNOG" id="COG0096">
    <property type="taxonomic scope" value="Bacteria"/>
</dbReference>
<dbReference type="HOGENOM" id="CLU_098428_0_0_6"/>
<dbReference type="OrthoDB" id="9802617at2"/>
<dbReference type="Proteomes" id="UP000000647">
    <property type="component" value="Chromosome"/>
</dbReference>
<dbReference type="GO" id="GO:1990904">
    <property type="term" value="C:ribonucleoprotein complex"/>
    <property type="evidence" value="ECO:0007669"/>
    <property type="project" value="UniProtKB-KW"/>
</dbReference>
<dbReference type="GO" id="GO:0005840">
    <property type="term" value="C:ribosome"/>
    <property type="evidence" value="ECO:0007669"/>
    <property type="project" value="UniProtKB-KW"/>
</dbReference>
<dbReference type="GO" id="GO:0019843">
    <property type="term" value="F:rRNA binding"/>
    <property type="evidence" value="ECO:0007669"/>
    <property type="project" value="UniProtKB-UniRule"/>
</dbReference>
<dbReference type="GO" id="GO:0003735">
    <property type="term" value="F:structural constituent of ribosome"/>
    <property type="evidence" value="ECO:0007669"/>
    <property type="project" value="InterPro"/>
</dbReference>
<dbReference type="GO" id="GO:0006412">
    <property type="term" value="P:translation"/>
    <property type="evidence" value="ECO:0007669"/>
    <property type="project" value="UniProtKB-UniRule"/>
</dbReference>
<dbReference type="FunFam" id="3.30.1370.30:FF:000002">
    <property type="entry name" value="30S ribosomal protein S8"/>
    <property type="match status" value="1"/>
</dbReference>
<dbReference type="FunFam" id="3.30.1490.10:FF:000001">
    <property type="entry name" value="30S ribosomal protein S8"/>
    <property type="match status" value="1"/>
</dbReference>
<dbReference type="Gene3D" id="3.30.1370.30">
    <property type="match status" value="1"/>
</dbReference>
<dbReference type="Gene3D" id="3.30.1490.10">
    <property type="match status" value="1"/>
</dbReference>
<dbReference type="HAMAP" id="MF_01302_B">
    <property type="entry name" value="Ribosomal_uS8_B"/>
    <property type="match status" value="1"/>
</dbReference>
<dbReference type="InterPro" id="IPR000630">
    <property type="entry name" value="Ribosomal_uS8"/>
</dbReference>
<dbReference type="InterPro" id="IPR047863">
    <property type="entry name" value="Ribosomal_uS8_CS"/>
</dbReference>
<dbReference type="InterPro" id="IPR035987">
    <property type="entry name" value="Ribosomal_uS8_sf"/>
</dbReference>
<dbReference type="NCBIfam" id="NF001109">
    <property type="entry name" value="PRK00136.1"/>
    <property type="match status" value="1"/>
</dbReference>
<dbReference type="PANTHER" id="PTHR11758">
    <property type="entry name" value="40S RIBOSOMAL PROTEIN S15A"/>
    <property type="match status" value="1"/>
</dbReference>
<dbReference type="Pfam" id="PF00410">
    <property type="entry name" value="Ribosomal_S8"/>
    <property type="match status" value="1"/>
</dbReference>
<dbReference type="SUPFAM" id="SSF56047">
    <property type="entry name" value="Ribosomal protein S8"/>
    <property type="match status" value="1"/>
</dbReference>
<dbReference type="PROSITE" id="PS00053">
    <property type="entry name" value="RIBOSOMAL_S8"/>
    <property type="match status" value="1"/>
</dbReference>
<comment type="function">
    <text evidence="1">One of the primary rRNA binding proteins, it binds directly to 16S rRNA central domain where it helps coordinate assembly of the platform of the 30S subunit.</text>
</comment>
<comment type="subunit">
    <text evidence="1">Part of the 30S ribosomal subunit. Contacts proteins S5 and S12.</text>
</comment>
<comment type="similarity">
    <text evidence="1">Belongs to the universal ribosomal protein uS8 family.</text>
</comment>
<proteinExistence type="inferred from homology"/>
<sequence length="131" mass="14703">MSMTDPIADMLTRVRNAHHAEKADVRMPSSKLKRAIAAVLQEEGYIEGYREVGEEKKPVLEVTLRYHEGQPAIREIQRYSRPGLRVYRGRDELPRVRNGLGTAIISTSKGVMSDGQARAQGHGGEVLCWVF</sequence>
<keyword id="KW-1185">Reference proteome</keyword>
<keyword id="KW-0687">Ribonucleoprotein</keyword>
<keyword id="KW-0689">Ribosomal protein</keyword>
<keyword id="KW-0694">RNA-binding</keyword>
<keyword id="KW-0699">rRNA-binding</keyword>
<protein>
    <recommendedName>
        <fullName evidence="1">Small ribosomal subunit protein uS8</fullName>
    </recommendedName>
    <alternativeName>
        <fullName evidence="2">30S ribosomal protein S8</fullName>
    </alternativeName>
</protein>
<name>RS8_HALHL</name>
<evidence type="ECO:0000255" key="1">
    <source>
        <dbReference type="HAMAP-Rule" id="MF_01302"/>
    </source>
</evidence>
<evidence type="ECO:0000305" key="2"/>
<gene>
    <name evidence="1" type="primary">rpsH</name>
    <name type="ordered locus">Hhal_0844</name>
</gene>
<feature type="chain" id="PRO_0000290849" description="Small ribosomal subunit protein uS8">
    <location>
        <begin position="1"/>
        <end position="131"/>
    </location>
</feature>
<reference key="1">
    <citation type="submission" date="2006-12" db="EMBL/GenBank/DDBJ databases">
        <title>Complete sequence of Halorhodospira halophila SL1.</title>
        <authorList>
            <consortium name="US DOE Joint Genome Institute"/>
            <person name="Copeland A."/>
            <person name="Lucas S."/>
            <person name="Lapidus A."/>
            <person name="Barry K."/>
            <person name="Detter J.C."/>
            <person name="Glavina del Rio T."/>
            <person name="Hammon N."/>
            <person name="Israni S."/>
            <person name="Dalin E."/>
            <person name="Tice H."/>
            <person name="Pitluck S."/>
            <person name="Saunders E."/>
            <person name="Brettin T."/>
            <person name="Bruce D."/>
            <person name="Han C."/>
            <person name="Tapia R."/>
            <person name="Schmutz J."/>
            <person name="Larimer F."/>
            <person name="Land M."/>
            <person name="Hauser L."/>
            <person name="Kyrpides N."/>
            <person name="Mikhailova N."/>
            <person name="Hoff W."/>
            <person name="Richardson P."/>
        </authorList>
    </citation>
    <scope>NUCLEOTIDE SEQUENCE [LARGE SCALE GENOMIC DNA]</scope>
    <source>
        <strain>DSM 244 / SL1</strain>
    </source>
</reference>